<feature type="chain" id="PRO_1000086496" description="Large ribosomal subunit protein uL24">
    <location>
        <begin position="1"/>
        <end position="104"/>
    </location>
</feature>
<dbReference type="EMBL" id="CP000821">
    <property type="protein sequence ID" value="ABV38910.1"/>
    <property type="molecule type" value="Genomic_DNA"/>
</dbReference>
<dbReference type="RefSeq" id="WP_012144639.1">
    <property type="nucleotide sequence ID" value="NC_009831.1"/>
</dbReference>
<dbReference type="SMR" id="A8G1D7"/>
<dbReference type="STRING" id="425104.Ssed_4306"/>
<dbReference type="KEGG" id="sse:Ssed_4306"/>
<dbReference type="eggNOG" id="COG0198">
    <property type="taxonomic scope" value="Bacteria"/>
</dbReference>
<dbReference type="HOGENOM" id="CLU_093315_2_2_6"/>
<dbReference type="OrthoDB" id="9807419at2"/>
<dbReference type="Proteomes" id="UP000002015">
    <property type="component" value="Chromosome"/>
</dbReference>
<dbReference type="GO" id="GO:1990904">
    <property type="term" value="C:ribonucleoprotein complex"/>
    <property type="evidence" value="ECO:0007669"/>
    <property type="project" value="UniProtKB-KW"/>
</dbReference>
<dbReference type="GO" id="GO:0005840">
    <property type="term" value="C:ribosome"/>
    <property type="evidence" value="ECO:0007669"/>
    <property type="project" value="UniProtKB-KW"/>
</dbReference>
<dbReference type="GO" id="GO:0019843">
    <property type="term" value="F:rRNA binding"/>
    <property type="evidence" value="ECO:0007669"/>
    <property type="project" value="UniProtKB-UniRule"/>
</dbReference>
<dbReference type="GO" id="GO:0003735">
    <property type="term" value="F:structural constituent of ribosome"/>
    <property type="evidence" value="ECO:0007669"/>
    <property type="project" value="InterPro"/>
</dbReference>
<dbReference type="GO" id="GO:0006412">
    <property type="term" value="P:translation"/>
    <property type="evidence" value="ECO:0007669"/>
    <property type="project" value="UniProtKB-UniRule"/>
</dbReference>
<dbReference type="CDD" id="cd06089">
    <property type="entry name" value="KOW_RPL26"/>
    <property type="match status" value="1"/>
</dbReference>
<dbReference type="FunFam" id="2.30.30.30:FF:000004">
    <property type="entry name" value="50S ribosomal protein L24"/>
    <property type="match status" value="1"/>
</dbReference>
<dbReference type="Gene3D" id="2.30.30.30">
    <property type="match status" value="1"/>
</dbReference>
<dbReference type="HAMAP" id="MF_01326_B">
    <property type="entry name" value="Ribosomal_uL24_B"/>
    <property type="match status" value="1"/>
</dbReference>
<dbReference type="InterPro" id="IPR005824">
    <property type="entry name" value="KOW"/>
</dbReference>
<dbReference type="InterPro" id="IPR014722">
    <property type="entry name" value="Rib_uL2_dom2"/>
</dbReference>
<dbReference type="InterPro" id="IPR003256">
    <property type="entry name" value="Ribosomal_uL24"/>
</dbReference>
<dbReference type="InterPro" id="IPR041988">
    <property type="entry name" value="Ribosomal_uL24_KOW"/>
</dbReference>
<dbReference type="InterPro" id="IPR008991">
    <property type="entry name" value="Translation_prot_SH3-like_sf"/>
</dbReference>
<dbReference type="NCBIfam" id="TIGR01079">
    <property type="entry name" value="rplX_bact"/>
    <property type="match status" value="1"/>
</dbReference>
<dbReference type="PANTHER" id="PTHR12903">
    <property type="entry name" value="MITOCHONDRIAL RIBOSOMAL PROTEIN L24"/>
    <property type="match status" value="1"/>
</dbReference>
<dbReference type="Pfam" id="PF00467">
    <property type="entry name" value="KOW"/>
    <property type="match status" value="1"/>
</dbReference>
<dbReference type="Pfam" id="PF17136">
    <property type="entry name" value="ribosomal_L24"/>
    <property type="match status" value="1"/>
</dbReference>
<dbReference type="SUPFAM" id="SSF50104">
    <property type="entry name" value="Translation proteins SH3-like domain"/>
    <property type="match status" value="1"/>
</dbReference>
<reference key="1">
    <citation type="submission" date="2007-08" db="EMBL/GenBank/DDBJ databases">
        <title>Complete sequence of Shewanella sediminis HAW-EB3.</title>
        <authorList>
            <consortium name="US DOE Joint Genome Institute"/>
            <person name="Copeland A."/>
            <person name="Lucas S."/>
            <person name="Lapidus A."/>
            <person name="Barry K."/>
            <person name="Glavina del Rio T."/>
            <person name="Dalin E."/>
            <person name="Tice H."/>
            <person name="Pitluck S."/>
            <person name="Chertkov O."/>
            <person name="Brettin T."/>
            <person name="Bruce D."/>
            <person name="Detter J.C."/>
            <person name="Han C."/>
            <person name="Schmutz J."/>
            <person name="Larimer F."/>
            <person name="Land M."/>
            <person name="Hauser L."/>
            <person name="Kyrpides N."/>
            <person name="Kim E."/>
            <person name="Zhao J.-S."/>
            <person name="Richardson P."/>
        </authorList>
    </citation>
    <scope>NUCLEOTIDE SEQUENCE [LARGE SCALE GENOMIC DNA]</scope>
    <source>
        <strain>HAW-EB3</strain>
    </source>
</reference>
<proteinExistence type="inferred from homology"/>
<keyword id="KW-1185">Reference proteome</keyword>
<keyword id="KW-0687">Ribonucleoprotein</keyword>
<keyword id="KW-0689">Ribosomal protein</keyword>
<keyword id="KW-0694">RNA-binding</keyword>
<keyword id="KW-0699">rRNA-binding</keyword>
<comment type="function">
    <text evidence="1">One of two assembly initiator proteins, it binds directly to the 5'-end of the 23S rRNA, where it nucleates assembly of the 50S subunit.</text>
</comment>
<comment type="function">
    <text evidence="1">One of the proteins that surrounds the polypeptide exit tunnel on the outside of the subunit.</text>
</comment>
<comment type="subunit">
    <text evidence="1">Part of the 50S ribosomal subunit.</text>
</comment>
<comment type="similarity">
    <text evidence="1">Belongs to the universal ribosomal protein uL24 family.</text>
</comment>
<evidence type="ECO:0000255" key="1">
    <source>
        <dbReference type="HAMAP-Rule" id="MF_01326"/>
    </source>
</evidence>
<evidence type="ECO:0000305" key="2"/>
<gene>
    <name evidence="1" type="primary">rplX</name>
    <name type="ordered locus">Ssed_4306</name>
</gene>
<accession>A8G1D7</accession>
<sequence length="104" mass="11283">MAAKIRREDEVIVLAGKDQGKRGKVSQVLPTGKLIVEGINLVKKHQKPNPQLGVAGGIVEQEAPIQASNVAIFNSATGKADRVGFRFEDGQKVRFFKSNSELVK</sequence>
<name>RL24_SHESH</name>
<organism>
    <name type="scientific">Shewanella sediminis (strain HAW-EB3)</name>
    <dbReference type="NCBI Taxonomy" id="425104"/>
    <lineage>
        <taxon>Bacteria</taxon>
        <taxon>Pseudomonadati</taxon>
        <taxon>Pseudomonadota</taxon>
        <taxon>Gammaproteobacteria</taxon>
        <taxon>Alteromonadales</taxon>
        <taxon>Shewanellaceae</taxon>
        <taxon>Shewanella</taxon>
    </lineage>
</organism>
<protein>
    <recommendedName>
        <fullName evidence="1">Large ribosomal subunit protein uL24</fullName>
    </recommendedName>
    <alternativeName>
        <fullName evidence="2">50S ribosomal protein L24</fullName>
    </alternativeName>
</protein>